<protein>
    <recommendedName>
        <fullName evidence="1">23S rRNA (guanosine-2'-O-)-methyltransferase RlmB</fullName>
        <ecNumber evidence="1">2.1.1.185</ecNumber>
    </recommendedName>
    <alternativeName>
        <fullName evidence="1">23S rRNA (guanosine2251 2'-O)-methyltransferase</fullName>
    </alternativeName>
    <alternativeName>
        <fullName evidence="1">23S rRNA Gm2251 2'-O-methyltransferase</fullName>
    </alternativeName>
</protein>
<proteinExistence type="inferred from homology"/>
<reference key="1">
    <citation type="journal article" date="2004" name="Proc. Natl. Acad. Sci. U.S.A.">
        <title>Genome sequence of the enterobacterial phytopathogen Erwinia carotovora subsp. atroseptica and characterization of virulence factors.</title>
        <authorList>
            <person name="Bell K.S."/>
            <person name="Sebaihia M."/>
            <person name="Pritchard L."/>
            <person name="Holden M.T.G."/>
            <person name="Hyman L.J."/>
            <person name="Holeva M.C."/>
            <person name="Thomson N.R."/>
            <person name="Bentley S.D."/>
            <person name="Churcher L.J.C."/>
            <person name="Mungall K."/>
            <person name="Atkin R."/>
            <person name="Bason N."/>
            <person name="Brooks K."/>
            <person name="Chillingworth T."/>
            <person name="Clark K."/>
            <person name="Doggett J."/>
            <person name="Fraser A."/>
            <person name="Hance Z."/>
            <person name="Hauser H."/>
            <person name="Jagels K."/>
            <person name="Moule S."/>
            <person name="Norbertczak H."/>
            <person name="Ormond D."/>
            <person name="Price C."/>
            <person name="Quail M.A."/>
            <person name="Sanders M."/>
            <person name="Walker D."/>
            <person name="Whitehead S."/>
            <person name="Salmond G.P.C."/>
            <person name="Birch P.R.J."/>
            <person name="Parkhill J."/>
            <person name="Toth I.K."/>
        </authorList>
    </citation>
    <scope>NUCLEOTIDE SEQUENCE [LARGE SCALE GENOMIC DNA]</scope>
    <source>
        <strain>SCRI 1043 / ATCC BAA-672</strain>
    </source>
</reference>
<accession>Q6D127</accession>
<dbReference type="EC" id="2.1.1.185" evidence="1"/>
<dbReference type="EMBL" id="BX950851">
    <property type="protein sequence ID" value="CAG76519.1"/>
    <property type="molecule type" value="Genomic_DNA"/>
</dbReference>
<dbReference type="RefSeq" id="WP_011095123.1">
    <property type="nucleotide sequence ID" value="NC_004547.2"/>
</dbReference>
<dbReference type="SMR" id="Q6D127"/>
<dbReference type="STRING" id="218491.ECA3621"/>
<dbReference type="GeneID" id="57210295"/>
<dbReference type="KEGG" id="eca:ECA3621"/>
<dbReference type="PATRIC" id="fig|218491.5.peg.3674"/>
<dbReference type="eggNOG" id="COG0566">
    <property type="taxonomic scope" value="Bacteria"/>
</dbReference>
<dbReference type="HOGENOM" id="CLU_021322_0_1_6"/>
<dbReference type="OrthoDB" id="9785673at2"/>
<dbReference type="Proteomes" id="UP000007966">
    <property type="component" value="Chromosome"/>
</dbReference>
<dbReference type="GO" id="GO:0005829">
    <property type="term" value="C:cytosol"/>
    <property type="evidence" value="ECO:0007669"/>
    <property type="project" value="TreeGrafter"/>
</dbReference>
<dbReference type="GO" id="GO:0003723">
    <property type="term" value="F:RNA binding"/>
    <property type="evidence" value="ECO:0007669"/>
    <property type="project" value="InterPro"/>
</dbReference>
<dbReference type="GO" id="GO:0070039">
    <property type="term" value="F:rRNA (guanosine-2'-O-)-methyltransferase activity"/>
    <property type="evidence" value="ECO:0007669"/>
    <property type="project" value="UniProtKB-UniRule"/>
</dbReference>
<dbReference type="CDD" id="cd18103">
    <property type="entry name" value="SpoU-like_RlmB"/>
    <property type="match status" value="1"/>
</dbReference>
<dbReference type="FunFam" id="3.40.1280.10:FF:000005">
    <property type="entry name" value="23S rRNA (guanosine-2'-O-)-methyltransferase RlmB"/>
    <property type="match status" value="1"/>
</dbReference>
<dbReference type="FunFam" id="3.30.1330.30:FF:000007">
    <property type="entry name" value="23S rRNA methyltransferase"/>
    <property type="match status" value="1"/>
</dbReference>
<dbReference type="Gene3D" id="3.30.1330.30">
    <property type="match status" value="1"/>
</dbReference>
<dbReference type="Gene3D" id="3.40.1280.10">
    <property type="match status" value="1"/>
</dbReference>
<dbReference type="HAMAP" id="MF_01887">
    <property type="entry name" value="23SrRNA_methyltr_B"/>
    <property type="match status" value="1"/>
</dbReference>
<dbReference type="InterPro" id="IPR024915">
    <property type="entry name" value="23S_rRNA_MeTrfase_RlmB"/>
</dbReference>
<dbReference type="InterPro" id="IPR029028">
    <property type="entry name" value="Alpha/beta_knot_MTases"/>
</dbReference>
<dbReference type="InterPro" id="IPR029064">
    <property type="entry name" value="Ribosomal_eL30-like_sf"/>
</dbReference>
<dbReference type="InterPro" id="IPR004441">
    <property type="entry name" value="rRNA_MeTrfase_TrmH"/>
</dbReference>
<dbReference type="InterPro" id="IPR001537">
    <property type="entry name" value="SpoU_MeTrfase"/>
</dbReference>
<dbReference type="InterPro" id="IPR013123">
    <property type="entry name" value="SpoU_subst-bd"/>
</dbReference>
<dbReference type="InterPro" id="IPR029026">
    <property type="entry name" value="tRNA_m1G_MTases_N"/>
</dbReference>
<dbReference type="NCBIfam" id="NF008386">
    <property type="entry name" value="PRK11181.1"/>
    <property type="match status" value="1"/>
</dbReference>
<dbReference type="NCBIfam" id="TIGR00186">
    <property type="entry name" value="rRNA_methyl_3"/>
    <property type="match status" value="1"/>
</dbReference>
<dbReference type="PANTHER" id="PTHR46429">
    <property type="entry name" value="23S RRNA (GUANOSINE-2'-O-)-METHYLTRANSFERASE RLMB"/>
    <property type="match status" value="1"/>
</dbReference>
<dbReference type="PANTHER" id="PTHR46429:SF1">
    <property type="entry name" value="23S RRNA (GUANOSINE-2'-O-)-METHYLTRANSFERASE RLMB"/>
    <property type="match status" value="1"/>
</dbReference>
<dbReference type="Pfam" id="PF00588">
    <property type="entry name" value="SpoU_methylase"/>
    <property type="match status" value="1"/>
</dbReference>
<dbReference type="Pfam" id="PF08032">
    <property type="entry name" value="SpoU_sub_bind"/>
    <property type="match status" value="1"/>
</dbReference>
<dbReference type="SMART" id="SM00967">
    <property type="entry name" value="SpoU_sub_bind"/>
    <property type="match status" value="1"/>
</dbReference>
<dbReference type="SUPFAM" id="SSF75217">
    <property type="entry name" value="alpha/beta knot"/>
    <property type="match status" value="1"/>
</dbReference>
<dbReference type="SUPFAM" id="SSF55315">
    <property type="entry name" value="L30e-like"/>
    <property type="match status" value="1"/>
</dbReference>
<gene>
    <name evidence="1" type="primary">rlmB</name>
    <name type="ordered locus">ECA3621</name>
</gene>
<comment type="function">
    <text evidence="1">Specifically methylates the ribose of guanosine 2251 in 23S rRNA.</text>
</comment>
<comment type="catalytic activity">
    <reaction evidence="1">
        <text>guanosine(2251) in 23S rRNA + S-adenosyl-L-methionine = 2'-O-methylguanosine(2251) in 23S rRNA + S-adenosyl-L-homocysteine + H(+)</text>
        <dbReference type="Rhea" id="RHEA:24140"/>
        <dbReference type="Rhea" id="RHEA-COMP:10239"/>
        <dbReference type="Rhea" id="RHEA-COMP:10241"/>
        <dbReference type="ChEBI" id="CHEBI:15378"/>
        <dbReference type="ChEBI" id="CHEBI:57856"/>
        <dbReference type="ChEBI" id="CHEBI:59789"/>
        <dbReference type="ChEBI" id="CHEBI:74269"/>
        <dbReference type="ChEBI" id="CHEBI:74445"/>
        <dbReference type="EC" id="2.1.1.185"/>
    </reaction>
</comment>
<comment type="subunit">
    <text evidence="1">Homodimer.</text>
</comment>
<comment type="subcellular location">
    <subcellularLocation>
        <location evidence="1">Cytoplasm</location>
    </subcellularLocation>
</comment>
<comment type="similarity">
    <text evidence="1">Belongs to the class IV-like SAM-binding methyltransferase superfamily. RNA methyltransferase TrmH family. RlmB subfamily.</text>
</comment>
<name>RLMB_PECAS</name>
<feature type="chain" id="PRO_0000159788" description="23S rRNA (guanosine-2'-O-)-methyltransferase RlmB">
    <location>
        <begin position="1"/>
        <end position="244"/>
    </location>
</feature>
<feature type="binding site" evidence="1">
    <location>
        <position position="196"/>
    </location>
    <ligand>
        <name>S-adenosyl-L-methionine</name>
        <dbReference type="ChEBI" id="CHEBI:59789"/>
    </ligand>
</feature>
<feature type="binding site" evidence="1">
    <location>
        <position position="216"/>
    </location>
    <ligand>
        <name>S-adenosyl-L-methionine</name>
        <dbReference type="ChEBI" id="CHEBI:59789"/>
    </ligand>
</feature>
<feature type="binding site" evidence="1">
    <location>
        <position position="225"/>
    </location>
    <ligand>
        <name>S-adenosyl-L-methionine</name>
        <dbReference type="ChEBI" id="CHEBI:59789"/>
    </ligand>
</feature>
<keyword id="KW-0963">Cytoplasm</keyword>
<keyword id="KW-0489">Methyltransferase</keyword>
<keyword id="KW-1185">Reference proteome</keyword>
<keyword id="KW-0698">rRNA processing</keyword>
<keyword id="KW-0949">S-adenosyl-L-methionine</keyword>
<keyword id="KW-0808">Transferase</keyword>
<organism>
    <name type="scientific">Pectobacterium atrosepticum (strain SCRI 1043 / ATCC BAA-672)</name>
    <name type="common">Erwinia carotovora subsp. atroseptica</name>
    <dbReference type="NCBI Taxonomy" id="218491"/>
    <lineage>
        <taxon>Bacteria</taxon>
        <taxon>Pseudomonadati</taxon>
        <taxon>Pseudomonadota</taxon>
        <taxon>Gammaproteobacteria</taxon>
        <taxon>Enterobacterales</taxon>
        <taxon>Pectobacteriaceae</taxon>
        <taxon>Pectobacterium</taxon>
    </lineage>
</organism>
<evidence type="ECO:0000255" key="1">
    <source>
        <dbReference type="HAMAP-Rule" id="MF_01887"/>
    </source>
</evidence>
<sequence length="244" mass="26620">MSEIIYGIHAVKALLERDPQRFLEVFILKGRDDRRLQPVIAELEAQGIVIQVASRQWLDKQAEDAVHQGIVAKVKEGRKYQENDLPAMLDNLEMPFLLILDGVTDPHNLGACLRNADGAGVHAVIVPRDRSAQLNATVKKVACGAAETIPVISVTNLARTMRLLQERNIWIVGTAGEADHTLYQSKLTGPLALVMGAEGEGMRRLTREHCDELISIPMAGSVSSLNVSVATGVCLFEAVRQRGG</sequence>